<feature type="chain" id="PRO_1000142129" description="Large ribosomal subunit protein uL4">
    <location>
        <begin position="1"/>
        <end position="207"/>
    </location>
</feature>
<feature type="region of interest" description="Disordered" evidence="2">
    <location>
        <begin position="48"/>
        <end position="70"/>
    </location>
</feature>
<sequence>MDLNIKSLAGQEAGSLGVAEGVFAADYNEALIHQVVVAYMAGARQGTKAQKTRSEVSGGGAKPWRQKGTGRARAGTIRSPIFRKGGVTFAAKPKSYKQKVNRKMYSGAVKSILSELLRLGRMTIVEELKLETPKTREFKSVIDSLGVKDVLFVVGVEEFSENLYLSSRNLKNVAVCDSVEINPVSLVCFENVVLTKKAIKEIEEKLV</sequence>
<organism>
    <name type="scientific">Francisella tularensis subsp. mediasiatica (strain FSC147)</name>
    <dbReference type="NCBI Taxonomy" id="441952"/>
    <lineage>
        <taxon>Bacteria</taxon>
        <taxon>Pseudomonadati</taxon>
        <taxon>Pseudomonadota</taxon>
        <taxon>Gammaproteobacteria</taxon>
        <taxon>Thiotrichales</taxon>
        <taxon>Francisellaceae</taxon>
        <taxon>Francisella</taxon>
    </lineage>
</organism>
<dbReference type="EMBL" id="CP000915">
    <property type="protein sequence ID" value="ACD31348.1"/>
    <property type="molecule type" value="Genomic_DNA"/>
</dbReference>
<dbReference type="SMR" id="B2SDY4"/>
<dbReference type="KEGG" id="ftm:FTM_1526"/>
<dbReference type="HOGENOM" id="CLU_041575_5_2_6"/>
<dbReference type="GO" id="GO:1990904">
    <property type="term" value="C:ribonucleoprotein complex"/>
    <property type="evidence" value="ECO:0007669"/>
    <property type="project" value="UniProtKB-KW"/>
</dbReference>
<dbReference type="GO" id="GO:0005840">
    <property type="term" value="C:ribosome"/>
    <property type="evidence" value="ECO:0007669"/>
    <property type="project" value="UniProtKB-KW"/>
</dbReference>
<dbReference type="GO" id="GO:0019843">
    <property type="term" value="F:rRNA binding"/>
    <property type="evidence" value="ECO:0007669"/>
    <property type="project" value="UniProtKB-UniRule"/>
</dbReference>
<dbReference type="GO" id="GO:0003735">
    <property type="term" value="F:structural constituent of ribosome"/>
    <property type="evidence" value="ECO:0007669"/>
    <property type="project" value="InterPro"/>
</dbReference>
<dbReference type="GO" id="GO:0006412">
    <property type="term" value="P:translation"/>
    <property type="evidence" value="ECO:0007669"/>
    <property type="project" value="UniProtKB-UniRule"/>
</dbReference>
<dbReference type="Gene3D" id="3.40.1370.10">
    <property type="match status" value="1"/>
</dbReference>
<dbReference type="HAMAP" id="MF_01328_B">
    <property type="entry name" value="Ribosomal_uL4_B"/>
    <property type="match status" value="1"/>
</dbReference>
<dbReference type="InterPro" id="IPR002136">
    <property type="entry name" value="Ribosomal_uL4"/>
</dbReference>
<dbReference type="InterPro" id="IPR013005">
    <property type="entry name" value="Ribosomal_uL4-like"/>
</dbReference>
<dbReference type="InterPro" id="IPR023574">
    <property type="entry name" value="Ribosomal_uL4_dom_sf"/>
</dbReference>
<dbReference type="NCBIfam" id="TIGR03953">
    <property type="entry name" value="rplD_bact"/>
    <property type="match status" value="1"/>
</dbReference>
<dbReference type="PANTHER" id="PTHR10746">
    <property type="entry name" value="50S RIBOSOMAL PROTEIN L4"/>
    <property type="match status" value="1"/>
</dbReference>
<dbReference type="PANTHER" id="PTHR10746:SF6">
    <property type="entry name" value="LARGE RIBOSOMAL SUBUNIT PROTEIN UL4M"/>
    <property type="match status" value="1"/>
</dbReference>
<dbReference type="Pfam" id="PF00573">
    <property type="entry name" value="Ribosomal_L4"/>
    <property type="match status" value="1"/>
</dbReference>
<dbReference type="SUPFAM" id="SSF52166">
    <property type="entry name" value="Ribosomal protein L4"/>
    <property type="match status" value="1"/>
</dbReference>
<comment type="function">
    <text evidence="1">One of the primary rRNA binding proteins, this protein initially binds near the 5'-end of the 23S rRNA. It is important during the early stages of 50S assembly. It makes multiple contacts with different domains of the 23S rRNA in the assembled 50S subunit and ribosome.</text>
</comment>
<comment type="function">
    <text evidence="1">Forms part of the polypeptide exit tunnel.</text>
</comment>
<comment type="subunit">
    <text evidence="1">Part of the 50S ribosomal subunit.</text>
</comment>
<comment type="similarity">
    <text evidence="1">Belongs to the universal ribosomal protein uL4 family.</text>
</comment>
<proteinExistence type="inferred from homology"/>
<evidence type="ECO:0000255" key="1">
    <source>
        <dbReference type="HAMAP-Rule" id="MF_01328"/>
    </source>
</evidence>
<evidence type="ECO:0000256" key="2">
    <source>
        <dbReference type="SAM" id="MobiDB-lite"/>
    </source>
</evidence>
<evidence type="ECO:0000305" key="3"/>
<protein>
    <recommendedName>
        <fullName evidence="1">Large ribosomal subunit protein uL4</fullName>
    </recommendedName>
    <alternativeName>
        <fullName evidence="3">50S ribosomal protein L4</fullName>
    </alternativeName>
</protein>
<keyword id="KW-0687">Ribonucleoprotein</keyword>
<keyword id="KW-0689">Ribosomal protein</keyword>
<keyword id="KW-0694">RNA-binding</keyword>
<keyword id="KW-0699">rRNA-binding</keyword>
<gene>
    <name evidence="1" type="primary">rplD</name>
    <name type="ordered locus">FTM_1526</name>
</gene>
<name>RL4_FRATM</name>
<reference key="1">
    <citation type="journal article" date="2009" name="PLoS Pathog.">
        <title>Molecular evolutionary consequences of niche restriction in Francisella tularensis, a facultative intracellular pathogen.</title>
        <authorList>
            <person name="Larsson P."/>
            <person name="Elfsmark D."/>
            <person name="Svensson K."/>
            <person name="Wikstroem P."/>
            <person name="Forsman M."/>
            <person name="Brettin T."/>
            <person name="Keim P."/>
            <person name="Johansson A."/>
        </authorList>
    </citation>
    <scope>NUCLEOTIDE SEQUENCE [LARGE SCALE GENOMIC DNA]</scope>
    <source>
        <strain>FSC147</strain>
    </source>
</reference>
<accession>B2SDY4</accession>